<dbReference type="EC" id="4.1.1.49" evidence="1"/>
<dbReference type="EMBL" id="CP000903">
    <property type="protein sequence ID" value="ABY45751.1"/>
    <property type="molecule type" value="Genomic_DNA"/>
</dbReference>
<dbReference type="RefSeq" id="WP_002034448.1">
    <property type="nucleotide sequence ID" value="NC_010184.1"/>
</dbReference>
<dbReference type="SMR" id="A9VLC7"/>
<dbReference type="GeneID" id="66265676"/>
<dbReference type="KEGG" id="bwe:BcerKBAB4_4595"/>
<dbReference type="eggNOG" id="COG1866">
    <property type="taxonomic scope" value="Bacteria"/>
</dbReference>
<dbReference type="HOGENOM" id="CLU_018247_0_1_9"/>
<dbReference type="UniPathway" id="UPA00138"/>
<dbReference type="Proteomes" id="UP000002154">
    <property type="component" value="Chromosome"/>
</dbReference>
<dbReference type="GO" id="GO:0005829">
    <property type="term" value="C:cytosol"/>
    <property type="evidence" value="ECO:0007669"/>
    <property type="project" value="TreeGrafter"/>
</dbReference>
<dbReference type="GO" id="GO:0005524">
    <property type="term" value="F:ATP binding"/>
    <property type="evidence" value="ECO:0007669"/>
    <property type="project" value="UniProtKB-UniRule"/>
</dbReference>
<dbReference type="GO" id="GO:0046872">
    <property type="term" value="F:metal ion binding"/>
    <property type="evidence" value="ECO:0007669"/>
    <property type="project" value="UniProtKB-KW"/>
</dbReference>
<dbReference type="GO" id="GO:0004612">
    <property type="term" value="F:phosphoenolpyruvate carboxykinase (ATP) activity"/>
    <property type="evidence" value="ECO:0007669"/>
    <property type="project" value="UniProtKB-UniRule"/>
</dbReference>
<dbReference type="GO" id="GO:0006094">
    <property type="term" value="P:gluconeogenesis"/>
    <property type="evidence" value="ECO:0007669"/>
    <property type="project" value="UniProtKB-UniRule"/>
</dbReference>
<dbReference type="CDD" id="cd00484">
    <property type="entry name" value="PEPCK_ATP"/>
    <property type="match status" value="1"/>
</dbReference>
<dbReference type="FunFam" id="2.170.8.10:FF:000001">
    <property type="entry name" value="Phosphoenolpyruvate carboxykinase (ATP)"/>
    <property type="match status" value="1"/>
</dbReference>
<dbReference type="FunFam" id="3.40.449.10:FF:000001">
    <property type="entry name" value="Phosphoenolpyruvate carboxykinase (ATP)"/>
    <property type="match status" value="1"/>
</dbReference>
<dbReference type="Gene3D" id="3.90.228.20">
    <property type="match status" value="1"/>
</dbReference>
<dbReference type="Gene3D" id="3.40.449.10">
    <property type="entry name" value="Phosphoenolpyruvate Carboxykinase, domain 1"/>
    <property type="match status" value="1"/>
</dbReference>
<dbReference type="Gene3D" id="2.170.8.10">
    <property type="entry name" value="Phosphoenolpyruvate Carboxykinase, domain 2"/>
    <property type="match status" value="1"/>
</dbReference>
<dbReference type="HAMAP" id="MF_00453">
    <property type="entry name" value="PEPCK_ATP"/>
    <property type="match status" value="1"/>
</dbReference>
<dbReference type="InterPro" id="IPR001272">
    <property type="entry name" value="PEP_carboxykinase_ATP"/>
</dbReference>
<dbReference type="InterPro" id="IPR013035">
    <property type="entry name" value="PEP_carboxykinase_C"/>
</dbReference>
<dbReference type="InterPro" id="IPR008210">
    <property type="entry name" value="PEP_carboxykinase_N"/>
</dbReference>
<dbReference type="InterPro" id="IPR015994">
    <property type="entry name" value="PEPCK_ATP_CS"/>
</dbReference>
<dbReference type="NCBIfam" id="TIGR00224">
    <property type="entry name" value="pckA"/>
    <property type="match status" value="1"/>
</dbReference>
<dbReference type="NCBIfam" id="NF006820">
    <property type="entry name" value="PRK09344.1-2"/>
    <property type="match status" value="1"/>
</dbReference>
<dbReference type="NCBIfam" id="NF006821">
    <property type="entry name" value="PRK09344.1-3"/>
    <property type="match status" value="1"/>
</dbReference>
<dbReference type="PANTHER" id="PTHR30031:SF0">
    <property type="entry name" value="PHOSPHOENOLPYRUVATE CARBOXYKINASE (ATP)"/>
    <property type="match status" value="1"/>
</dbReference>
<dbReference type="PANTHER" id="PTHR30031">
    <property type="entry name" value="PHOSPHOENOLPYRUVATE CARBOXYKINASE ATP"/>
    <property type="match status" value="1"/>
</dbReference>
<dbReference type="Pfam" id="PF01293">
    <property type="entry name" value="PEPCK_ATP"/>
    <property type="match status" value="1"/>
</dbReference>
<dbReference type="PIRSF" id="PIRSF006294">
    <property type="entry name" value="PEP_crbxkin"/>
    <property type="match status" value="1"/>
</dbReference>
<dbReference type="SUPFAM" id="SSF68923">
    <property type="entry name" value="PEP carboxykinase N-terminal domain"/>
    <property type="match status" value="1"/>
</dbReference>
<dbReference type="SUPFAM" id="SSF53795">
    <property type="entry name" value="PEP carboxykinase-like"/>
    <property type="match status" value="1"/>
</dbReference>
<dbReference type="PROSITE" id="PS00532">
    <property type="entry name" value="PEPCK_ATP"/>
    <property type="match status" value="1"/>
</dbReference>
<gene>
    <name evidence="1" type="primary">pckA</name>
    <name type="ordered locus">BcerKBAB4_4595</name>
</gene>
<reference key="1">
    <citation type="journal article" date="2008" name="Chem. Biol. Interact.">
        <title>Extending the Bacillus cereus group genomics to putative food-borne pathogens of different toxicity.</title>
        <authorList>
            <person name="Lapidus A."/>
            <person name="Goltsman E."/>
            <person name="Auger S."/>
            <person name="Galleron N."/>
            <person name="Segurens B."/>
            <person name="Dossat C."/>
            <person name="Land M.L."/>
            <person name="Broussolle V."/>
            <person name="Brillard J."/>
            <person name="Guinebretiere M.-H."/>
            <person name="Sanchis V."/>
            <person name="Nguen-the C."/>
            <person name="Lereclus D."/>
            <person name="Richardson P."/>
            <person name="Wincker P."/>
            <person name="Weissenbach J."/>
            <person name="Ehrlich S.D."/>
            <person name="Sorokin A."/>
        </authorList>
    </citation>
    <scope>NUCLEOTIDE SEQUENCE [LARGE SCALE GENOMIC DNA]</scope>
    <source>
        <strain>KBAB4</strain>
    </source>
</reference>
<comment type="function">
    <text evidence="1">Involved in the gluconeogenesis. Catalyzes the conversion of oxaloacetate (OAA) to phosphoenolpyruvate (PEP) through direct phosphoryl transfer between the nucleoside triphosphate and OAA.</text>
</comment>
<comment type="catalytic activity">
    <reaction evidence="1">
        <text>oxaloacetate + ATP = phosphoenolpyruvate + ADP + CO2</text>
        <dbReference type="Rhea" id="RHEA:18617"/>
        <dbReference type="ChEBI" id="CHEBI:16452"/>
        <dbReference type="ChEBI" id="CHEBI:16526"/>
        <dbReference type="ChEBI" id="CHEBI:30616"/>
        <dbReference type="ChEBI" id="CHEBI:58702"/>
        <dbReference type="ChEBI" id="CHEBI:456216"/>
        <dbReference type="EC" id="4.1.1.49"/>
    </reaction>
</comment>
<comment type="cofactor">
    <cofactor evidence="1">
        <name>Mn(2+)</name>
        <dbReference type="ChEBI" id="CHEBI:29035"/>
    </cofactor>
    <text evidence="1">Binds 1 Mn(2+) ion per subunit.</text>
</comment>
<comment type="pathway">
    <text evidence="1">Carbohydrate biosynthesis; gluconeogenesis.</text>
</comment>
<comment type="subcellular location">
    <subcellularLocation>
        <location evidence="1">Cytoplasm</location>
    </subcellularLocation>
</comment>
<comment type="similarity">
    <text evidence="1">Belongs to the phosphoenolpyruvate carboxykinase (ATP) family.</text>
</comment>
<sequence length="528" mass="58005">MSTVNVQIGLHELLNGSNAQIQLSVPQLVEKVLMRNEGKLTSTGAVSASTGKYTGRSPKDKFIVKEASVADKIAWGAVNQPISEEHFNKLYIKVLEYLKEKEELFIFKGFAGADRNYRLPIQVVNEYAWHNLFVHQLFIRPNEEELATHESEFTIVSAPNFKADPAIDGTNSEAFIMVSFEKRIVLIGGTEYAGEMKKSIFSIMNFLLPEQDILSMHCSSNVGEEGDVALFFGLSGTGKTTLSADPNRKLIGDDEHGWSDNGVFNIEGGCYAKCVNLSHEKEPQIFDAIKFGSVLENVVIDGQTRIADYNDTTLTENTRAAYPMHAIDNIVLPSVAGHPNTIIFLTADASGVLPPISKLSKEQAMYHFLSGYTSKLAGTERGVTSPQATFSTCFGSPFLPLDASRYAEMLGEKIEKHDAKVFLVNTGWTGGEYGVGKRMNLGYTRAMIQAALSGELAKAETAKHDIFGLEVPRHVPGVPDEVLMPEQTWADKDAYKVKAIELANEFKENFKKFDSVSEAIINLGGPIA</sequence>
<proteinExistence type="inferred from homology"/>
<feature type="chain" id="PRO_1000125057" description="Phosphoenolpyruvate carboxykinase (ATP)">
    <location>
        <begin position="1"/>
        <end position="528"/>
    </location>
</feature>
<feature type="binding site" evidence="1">
    <location>
        <position position="56"/>
    </location>
    <ligand>
        <name>substrate</name>
    </ligand>
</feature>
<feature type="binding site" evidence="1">
    <location>
        <position position="192"/>
    </location>
    <ligand>
        <name>substrate</name>
    </ligand>
</feature>
<feature type="binding site" evidence="1">
    <location>
        <position position="198"/>
    </location>
    <ligand>
        <name>ATP</name>
        <dbReference type="ChEBI" id="CHEBI:30616"/>
    </ligand>
</feature>
<feature type="binding site" evidence="1">
    <location>
        <position position="198"/>
    </location>
    <ligand>
        <name>Mn(2+)</name>
        <dbReference type="ChEBI" id="CHEBI:29035"/>
    </ligand>
</feature>
<feature type="binding site" evidence="1">
    <location>
        <position position="198"/>
    </location>
    <ligand>
        <name>substrate</name>
    </ligand>
</feature>
<feature type="binding site" evidence="1">
    <location>
        <position position="217"/>
    </location>
    <ligand>
        <name>ATP</name>
        <dbReference type="ChEBI" id="CHEBI:30616"/>
    </ligand>
</feature>
<feature type="binding site" evidence="1">
    <location>
        <position position="217"/>
    </location>
    <ligand>
        <name>Mn(2+)</name>
        <dbReference type="ChEBI" id="CHEBI:29035"/>
    </ligand>
</feature>
<feature type="binding site" evidence="1">
    <location>
        <begin position="233"/>
        <end position="241"/>
    </location>
    <ligand>
        <name>ATP</name>
        <dbReference type="ChEBI" id="CHEBI:30616"/>
    </ligand>
</feature>
<feature type="binding site" evidence="1">
    <location>
        <position position="254"/>
    </location>
    <ligand>
        <name>Mn(2+)</name>
        <dbReference type="ChEBI" id="CHEBI:29035"/>
    </ligand>
</feature>
<feature type="binding site" evidence="1">
    <location>
        <position position="282"/>
    </location>
    <ligand>
        <name>ATP</name>
        <dbReference type="ChEBI" id="CHEBI:30616"/>
    </ligand>
</feature>
<feature type="binding site" evidence="1">
    <location>
        <position position="319"/>
    </location>
    <ligand>
        <name>ATP</name>
        <dbReference type="ChEBI" id="CHEBI:30616"/>
    </ligand>
</feature>
<feature type="binding site" evidence="1">
    <location>
        <position position="319"/>
    </location>
    <ligand>
        <name>substrate</name>
    </ligand>
</feature>
<feature type="binding site" evidence="1">
    <location>
        <position position="444"/>
    </location>
    <ligand>
        <name>ATP</name>
        <dbReference type="ChEBI" id="CHEBI:30616"/>
    </ligand>
</feature>
<name>PCKA_BACMK</name>
<accession>A9VLC7</accession>
<organism>
    <name type="scientific">Bacillus mycoides (strain KBAB4)</name>
    <name type="common">Bacillus weihenstephanensis</name>
    <dbReference type="NCBI Taxonomy" id="315730"/>
    <lineage>
        <taxon>Bacteria</taxon>
        <taxon>Bacillati</taxon>
        <taxon>Bacillota</taxon>
        <taxon>Bacilli</taxon>
        <taxon>Bacillales</taxon>
        <taxon>Bacillaceae</taxon>
        <taxon>Bacillus</taxon>
        <taxon>Bacillus cereus group</taxon>
    </lineage>
</organism>
<evidence type="ECO:0000255" key="1">
    <source>
        <dbReference type="HAMAP-Rule" id="MF_00453"/>
    </source>
</evidence>
<keyword id="KW-0067">ATP-binding</keyword>
<keyword id="KW-0963">Cytoplasm</keyword>
<keyword id="KW-0210">Decarboxylase</keyword>
<keyword id="KW-0312">Gluconeogenesis</keyword>
<keyword id="KW-0456">Lyase</keyword>
<keyword id="KW-0464">Manganese</keyword>
<keyword id="KW-0479">Metal-binding</keyword>
<keyword id="KW-0547">Nucleotide-binding</keyword>
<protein>
    <recommendedName>
        <fullName evidence="1">Phosphoenolpyruvate carboxykinase (ATP)</fullName>
        <shortName evidence="1">PCK</shortName>
        <shortName evidence="1">PEP carboxykinase</shortName>
        <shortName evidence="1">PEPCK</shortName>
        <ecNumber evidence="1">4.1.1.49</ecNumber>
    </recommendedName>
</protein>